<accession>A8ZTQ7</accession>
<proteinExistence type="inferred from homology"/>
<keyword id="KW-0001">2Fe-2S</keyword>
<keyword id="KW-0028">Amino-acid biosynthesis</keyword>
<keyword id="KW-0100">Branched-chain amino acid biosynthesis</keyword>
<keyword id="KW-0408">Iron</keyword>
<keyword id="KW-0411">Iron-sulfur</keyword>
<keyword id="KW-0456">Lyase</keyword>
<keyword id="KW-0460">Magnesium</keyword>
<keyword id="KW-0479">Metal-binding</keyword>
<keyword id="KW-1185">Reference proteome</keyword>
<dbReference type="EC" id="4.2.1.9" evidence="1"/>
<dbReference type="EMBL" id="CP000859">
    <property type="protein sequence ID" value="ABW67840.1"/>
    <property type="molecule type" value="Genomic_DNA"/>
</dbReference>
<dbReference type="RefSeq" id="WP_012175452.1">
    <property type="nucleotide sequence ID" value="NC_009943.1"/>
</dbReference>
<dbReference type="SMR" id="A8ZTQ7"/>
<dbReference type="STRING" id="96561.Dole_2036"/>
<dbReference type="KEGG" id="dol:Dole_2036"/>
<dbReference type="eggNOG" id="COG0129">
    <property type="taxonomic scope" value="Bacteria"/>
</dbReference>
<dbReference type="HOGENOM" id="CLU_014271_4_2_7"/>
<dbReference type="OrthoDB" id="9807077at2"/>
<dbReference type="UniPathway" id="UPA00047">
    <property type="reaction ID" value="UER00057"/>
</dbReference>
<dbReference type="UniPathway" id="UPA00049">
    <property type="reaction ID" value="UER00061"/>
</dbReference>
<dbReference type="Proteomes" id="UP000008561">
    <property type="component" value="Chromosome"/>
</dbReference>
<dbReference type="GO" id="GO:0005829">
    <property type="term" value="C:cytosol"/>
    <property type="evidence" value="ECO:0007669"/>
    <property type="project" value="TreeGrafter"/>
</dbReference>
<dbReference type="GO" id="GO:0051537">
    <property type="term" value="F:2 iron, 2 sulfur cluster binding"/>
    <property type="evidence" value="ECO:0007669"/>
    <property type="project" value="UniProtKB-UniRule"/>
</dbReference>
<dbReference type="GO" id="GO:0004160">
    <property type="term" value="F:dihydroxy-acid dehydratase activity"/>
    <property type="evidence" value="ECO:0007669"/>
    <property type="project" value="UniProtKB-UniRule"/>
</dbReference>
<dbReference type="GO" id="GO:0000287">
    <property type="term" value="F:magnesium ion binding"/>
    <property type="evidence" value="ECO:0007669"/>
    <property type="project" value="UniProtKB-UniRule"/>
</dbReference>
<dbReference type="GO" id="GO:0009097">
    <property type="term" value="P:isoleucine biosynthetic process"/>
    <property type="evidence" value="ECO:0007669"/>
    <property type="project" value="UniProtKB-UniRule"/>
</dbReference>
<dbReference type="GO" id="GO:0009099">
    <property type="term" value="P:L-valine biosynthetic process"/>
    <property type="evidence" value="ECO:0007669"/>
    <property type="project" value="UniProtKB-UniRule"/>
</dbReference>
<dbReference type="FunFam" id="3.50.30.80:FF:000001">
    <property type="entry name" value="Dihydroxy-acid dehydratase"/>
    <property type="match status" value="1"/>
</dbReference>
<dbReference type="Gene3D" id="3.50.30.80">
    <property type="entry name" value="IlvD/EDD C-terminal domain-like"/>
    <property type="match status" value="1"/>
</dbReference>
<dbReference type="HAMAP" id="MF_00012">
    <property type="entry name" value="IlvD"/>
    <property type="match status" value="1"/>
</dbReference>
<dbReference type="InterPro" id="IPR042096">
    <property type="entry name" value="Dihydro-acid_dehy_C"/>
</dbReference>
<dbReference type="InterPro" id="IPR004404">
    <property type="entry name" value="DihydroxyA_deHydtase"/>
</dbReference>
<dbReference type="InterPro" id="IPR020558">
    <property type="entry name" value="DiOHA_6PGluconate_deHydtase_CS"/>
</dbReference>
<dbReference type="InterPro" id="IPR056740">
    <property type="entry name" value="ILV_EDD_C"/>
</dbReference>
<dbReference type="InterPro" id="IPR000581">
    <property type="entry name" value="ILV_EDD_N"/>
</dbReference>
<dbReference type="InterPro" id="IPR037237">
    <property type="entry name" value="IlvD/EDD_N"/>
</dbReference>
<dbReference type="NCBIfam" id="TIGR00110">
    <property type="entry name" value="ilvD"/>
    <property type="match status" value="1"/>
</dbReference>
<dbReference type="NCBIfam" id="NF002068">
    <property type="entry name" value="PRK00911.1"/>
    <property type="match status" value="1"/>
</dbReference>
<dbReference type="PANTHER" id="PTHR43661">
    <property type="entry name" value="D-XYLONATE DEHYDRATASE"/>
    <property type="match status" value="1"/>
</dbReference>
<dbReference type="PANTHER" id="PTHR43661:SF3">
    <property type="entry name" value="D-XYLONATE DEHYDRATASE YAGF-RELATED"/>
    <property type="match status" value="1"/>
</dbReference>
<dbReference type="Pfam" id="PF24877">
    <property type="entry name" value="ILV_EDD_C"/>
    <property type="match status" value="1"/>
</dbReference>
<dbReference type="Pfam" id="PF00920">
    <property type="entry name" value="ILVD_EDD_N"/>
    <property type="match status" value="1"/>
</dbReference>
<dbReference type="SUPFAM" id="SSF143975">
    <property type="entry name" value="IlvD/EDD N-terminal domain-like"/>
    <property type="match status" value="1"/>
</dbReference>
<dbReference type="SUPFAM" id="SSF52016">
    <property type="entry name" value="LeuD/IlvD-like"/>
    <property type="match status" value="1"/>
</dbReference>
<dbReference type="PROSITE" id="PS00886">
    <property type="entry name" value="ILVD_EDD_1"/>
    <property type="match status" value="1"/>
</dbReference>
<dbReference type="PROSITE" id="PS00887">
    <property type="entry name" value="ILVD_EDD_2"/>
    <property type="match status" value="1"/>
</dbReference>
<gene>
    <name evidence="1" type="primary">ilvD</name>
    <name type="ordered locus">Dole_2036</name>
</gene>
<evidence type="ECO:0000255" key="1">
    <source>
        <dbReference type="HAMAP-Rule" id="MF_00012"/>
    </source>
</evidence>
<feature type="chain" id="PRO_1000089380" description="Dihydroxy-acid dehydratase">
    <location>
        <begin position="1"/>
        <end position="557"/>
    </location>
</feature>
<feature type="active site" description="Proton acceptor" evidence="1">
    <location>
        <position position="472"/>
    </location>
</feature>
<feature type="binding site" evidence="1">
    <location>
        <position position="78"/>
    </location>
    <ligand>
        <name>Mg(2+)</name>
        <dbReference type="ChEBI" id="CHEBI:18420"/>
    </ligand>
</feature>
<feature type="binding site" evidence="1">
    <location>
        <position position="119"/>
    </location>
    <ligand>
        <name>[2Fe-2S] cluster</name>
        <dbReference type="ChEBI" id="CHEBI:190135"/>
    </ligand>
</feature>
<feature type="binding site" evidence="1">
    <location>
        <position position="120"/>
    </location>
    <ligand>
        <name>Mg(2+)</name>
        <dbReference type="ChEBI" id="CHEBI:18420"/>
    </ligand>
</feature>
<feature type="binding site" description="via carbamate group" evidence="1">
    <location>
        <position position="121"/>
    </location>
    <ligand>
        <name>Mg(2+)</name>
        <dbReference type="ChEBI" id="CHEBI:18420"/>
    </ligand>
</feature>
<feature type="binding site" evidence="1">
    <location>
        <position position="194"/>
    </location>
    <ligand>
        <name>[2Fe-2S] cluster</name>
        <dbReference type="ChEBI" id="CHEBI:190135"/>
    </ligand>
</feature>
<feature type="binding site" evidence="1">
    <location>
        <position position="446"/>
    </location>
    <ligand>
        <name>Mg(2+)</name>
        <dbReference type="ChEBI" id="CHEBI:18420"/>
    </ligand>
</feature>
<feature type="modified residue" description="N6-carboxylysine" evidence="1">
    <location>
        <position position="121"/>
    </location>
</feature>
<protein>
    <recommendedName>
        <fullName evidence="1">Dihydroxy-acid dehydratase</fullName>
        <shortName evidence="1">DAD</shortName>
        <ecNumber evidence="1">4.2.1.9</ecNumber>
    </recommendedName>
</protein>
<organism>
    <name type="scientific">Desulfosudis oleivorans (strain DSM 6200 / JCM 39069 / Hxd3)</name>
    <name type="common">Desulfococcus oleovorans</name>
    <dbReference type="NCBI Taxonomy" id="96561"/>
    <lineage>
        <taxon>Bacteria</taxon>
        <taxon>Pseudomonadati</taxon>
        <taxon>Thermodesulfobacteriota</taxon>
        <taxon>Desulfobacteria</taxon>
        <taxon>Desulfobacterales</taxon>
        <taxon>Desulfosudaceae</taxon>
        <taxon>Desulfosudis</taxon>
    </lineage>
</organism>
<name>ILVD_DESOH</name>
<comment type="function">
    <text evidence="1">Functions in the biosynthesis of branched-chain amino acids. Catalyzes the dehydration of (2R,3R)-2,3-dihydroxy-3-methylpentanoate (2,3-dihydroxy-3-methylvalerate) into 2-oxo-3-methylpentanoate (2-oxo-3-methylvalerate) and of (2R)-2,3-dihydroxy-3-methylbutanoate (2,3-dihydroxyisovalerate) into 2-oxo-3-methylbutanoate (2-oxoisovalerate), the penultimate precursor to L-isoleucine and L-valine, respectively.</text>
</comment>
<comment type="catalytic activity">
    <reaction evidence="1">
        <text>(2R)-2,3-dihydroxy-3-methylbutanoate = 3-methyl-2-oxobutanoate + H2O</text>
        <dbReference type="Rhea" id="RHEA:24809"/>
        <dbReference type="ChEBI" id="CHEBI:11851"/>
        <dbReference type="ChEBI" id="CHEBI:15377"/>
        <dbReference type="ChEBI" id="CHEBI:49072"/>
        <dbReference type="EC" id="4.2.1.9"/>
    </reaction>
    <physiologicalReaction direction="left-to-right" evidence="1">
        <dbReference type="Rhea" id="RHEA:24810"/>
    </physiologicalReaction>
</comment>
<comment type="catalytic activity">
    <reaction evidence="1">
        <text>(2R,3R)-2,3-dihydroxy-3-methylpentanoate = (S)-3-methyl-2-oxopentanoate + H2O</text>
        <dbReference type="Rhea" id="RHEA:27694"/>
        <dbReference type="ChEBI" id="CHEBI:15377"/>
        <dbReference type="ChEBI" id="CHEBI:35146"/>
        <dbReference type="ChEBI" id="CHEBI:49258"/>
        <dbReference type="EC" id="4.2.1.9"/>
    </reaction>
    <physiologicalReaction direction="left-to-right" evidence="1">
        <dbReference type="Rhea" id="RHEA:27695"/>
    </physiologicalReaction>
</comment>
<comment type="cofactor">
    <cofactor evidence="1">
        <name>[2Fe-2S] cluster</name>
        <dbReference type="ChEBI" id="CHEBI:190135"/>
    </cofactor>
    <text evidence="1">Binds 1 [2Fe-2S] cluster per subunit. This cluster acts as a Lewis acid cofactor.</text>
</comment>
<comment type="cofactor">
    <cofactor evidence="1">
        <name>Mg(2+)</name>
        <dbReference type="ChEBI" id="CHEBI:18420"/>
    </cofactor>
</comment>
<comment type="pathway">
    <text evidence="1">Amino-acid biosynthesis; L-isoleucine biosynthesis; L-isoleucine from 2-oxobutanoate: step 3/4.</text>
</comment>
<comment type="pathway">
    <text evidence="1">Amino-acid biosynthesis; L-valine biosynthesis; L-valine from pyruvate: step 3/4.</text>
</comment>
<comment type="subunit">
    <text evidence="1">Homodimer.</text>
</comment>
<comment type="similarity">
    <text evidence="1">Belongs to the IlvD/Edd family.</text>
</comment>
<sequence length="557" mass="58232">MKSDSMKEGLARAPHRSLLKSIGYTDEEIGRPIIGIVNSANEIVPGHADLNKIARAVKDGVYMAGGTPVEFSTIGVCDGIAMNHIGMKYSLGSRELIADSVEIMATAHAFDALVMIPNCDKIVPGMLMAAARLNLPTIFISGGPMLAGRYPGKPEKKVDLITVFEAVGAVKSGRMAPEELAIIEDAACPTCGSCSGMFTANSMNCLTEAIGMGLPGNGTVPAVMSERVRMAKQAGMRILDLLKNGVTPDKIMTAKAFRNALAVDMALGCSTNTVLHLPAIAHEAGVSISLDLINEISGIAPHLCSLSPAGPNHIEDLNMAGGIQAVLKELARKSGLIDPDCLTVTGRTVGENIASARDADGQVIRTLETPHHAQGGLAVLFGNLAPDGCVVKQSAVVDKMLVHEGPARVFDSEEDATTAIMDGRIKKGDVLVIRYEGPKGGPGMREMLTPTSALAGMGLDSTVALITDGRFSGGSRGAAIGHVSPEAMEGGPIAVVKEGDTITIDIPKKKIGLKLDAGEIQNRLSGWNRPAPKITRGYMARYADQVSSANTGAIFKK</sequence>
<reference key="1">
    <citation type="submission" date="2007-10" db="EMBL/GenBank/DDBJ databases">
        <title>Complete sequence of Desulfococcus oleovorans Hxd3.</title>
        <authorList>
            <consortium name="US DOE Joint Genome Institute"/>
            <person name="Copeland A."/>
            <person name="Lucas S."/>
            <person name="Lapidus A."/>
            <person name="Barry K."/>
            <person name="Glavina del Rio T."/>
            <person name="Dalin E."/>
            <person name="Tice H."/>
            <person name="Pitluck S."/>
            <person name="Kiss H."/>
            <person name="Brettin T."/>
            <person name="Bruce D."/>
            <person name="Detter J.C."/>
            <person name="Han C."/>
            <person name="Schmutz J."/>
            <person name="Larimer F."/>
            <person name="Land M."/>
            <person name="Hauser L."/>
            <person name="Kyrpides N."/>
            <person name="Kim E."/>
            <person name="Wawrik B."/>
            <person name="Richardson P."/>
        </authorList>
    </citation>
    <scope>NUCLEOTIDE SEQUENCE [LARGE SCALE GENOMIC DNA]</scope>
    <source>
        <strain>DSM 6200 / JCM 39069 / Hxd3</strain>
    </source>
</reference>